<accession>Q04Y97</accession>
<comment type="function">
    <text evidence="1">Catalyzes the phosphorylation of pantothenate (Pan), the first step in CoA biosynthesis.</text>
</comment>
<comment type="catalytic activity">
    <reaction evidence="1">
        <text>(R)-pantothenate + ATP = (R)-4'-phosphopantothenate + ADP + H(+)</text>
        <dbReference type="Rhea" id="RHEA:16373"/>
        <dbReference type="ChEBI" id="CHEBI:10986"/>
        <dbReference type="ChEBI" id="CHEBI:15378"/>
        <dbReference type="ChEBI" id="CHEBI:29032"/>
        <dbReference type="ChEBI" id="CHEBI:30616"/>
        <dbReference type="ChEBI" id="CHEBI:456216"/>
        <dbReference type="EC" id="2.7.1.33"/>
    </reaction>
</comment>
<comment type="cofactor">
    <cofactor evidence="1">
        <name>NH4(+)</name>
        <dbReference type="ChEBI" id="CHEBI:28938"/>
    </cofactor>
    <cofactor evidence="1">
        <name>K(+)</name>
        <dbReference type="ChEBI" id="CHEBI:29103"/>
    </cofactor>
    <text evidence="1">A monovalent cation. Ammonium or potassium.</text>
</comment>
<comment type="pathway">
    <text evidence="1">Cofactor biosynthesis; coenzyme A biosynthesis; CoA from (R)-pantothenate: step 1/5.</text>
</comment>
<comment type="subunit">
    <text evidence="1">Homodimer.</text>
</comment>
<comment type="subcellular location">
    <subcellularLocation>
        <location evidence="1">Cytoplasm</location>
    </subcellularLocation>
</comment>
<comment type="similarity">
    <text evidence="1">Belongs to the type III pantothenate kinase family.</text>
</comment>
<protein>
    <recommendedName>
        <fullName evidence="1">Type III pantothenate kinase</fullName>
        <ecNumber evidence="1">2.7.1.33</ecNumber>
    </recommendedName>
    <alternativeName>
        <fullName evidence="1">PanK-III</fullName>
    </alternativeName>
    <alternativeName>
        <fullName evidence="1">Pantothenic acid kinase</fullName>
    </alternativeName>
</protein>
<organism>
    <name type="scientific">Leptospira borgpetersenii serovar Hardjo-bovis (strain L550)</name>
    <dbReference type="NCBI Taxonomy" id="355276"/>
    <lineage>
        <taxon>Bacteria</taxon>
        <taxon>Pseudomonadati</taxon>
        <taxon>Spirochaetota</taxon>
        <taxon>Spirochaetia</taxon>
        <taxon>Leptospirales</taxon>
        <taxon>Leptospiraceae</taxon>
        <taxon>Leptospira</taxon>
    </lineage>
</organism>
<feature type="chain" id="PRO_1000054384" description="Type III pantothenate kinase">
    <location>
        <begin position="1"/>
        <end position="257"/>
    </location>
</feature>
<feature type="active site" description="Proton acceptor" evidence="1">
    <location>
        <position position="111"/>
    </location>
</feature>
<feature type="binding site" evidence="1">
    <location>
        <begin position="6"/>
        <end position="13"/>
    </location>
    <ligand>
        <name>ATP</name>
        <dbReference type="ChEBI" id="CHEBI:30616"/>
    </ligand>
</feature>
<feature type="binding site" evidence="1">
    <location>
        <position position="102"/>
    </location>
    <ligand>
        <name>substrate</name>
    </ligand>
</feature>
<feature type="binding site" evidence="1">
    <location>
        <begin position="109"/>
        <end position="112"/>
    </location>
    <ligand>
        <name>substrate</name>
    </ligand>
</feature>
<feature type="binding site" evidence="1">
    <location>
        <position position="131"/>
    </location>
    <ligand>
        <name>K(+)</name>
        <dbReference type="ChEBI" id="CHEBI:29103"/>
    </ligand>
</feature>
<feature type="binding site" evidence="1">
    <location>
        <position position="134"/>
    </location>
    <ligand>
        <name>ATP</name>
        <dbReference type="ChEBI" id="CHEBI:30616"/>
    </ligand>
</feature>
<feature type="binding site" evidence="1">
    <location>
        <position position="186"/>
    </location>
    <ligand>
        <name>substrate</name>
    </ligand>
</feature>
<gene>
    <name evidence="1" type="primary">coaX</name>
    <name type="ordered locus">LBL_2588</name>
</gene>
<reference key="1">
    <citation type="journal article" date="2006" name="Proc. Natl. Acad. Sci. U.S.A.">
        <title>Genome reduction in Leptospira borgpetersenii reflects limited transmission potential.</title>
        <authorList>
            <person name="Bulach D.M."/>
            <person name="Zuerner R.L."/>
            <person name="Wilson P."/>
            <person name="Seemann T."/>
            <person name="McGrath A."/>
            <person name="Cullen P.A."/>
            <person name="Davis J."/>
            <person name="Johnson M."/>
            <person name="Kuczek E."/>
            <person name="Alt D.P."/>
            <person name="Peterson-Burch B."/>
            <person name="Coppel R.L."/>
            <person name="Rood J.I."/>
            <person name="Davies J.K."/>
            <person name="Adler B."/>
        </authorList>
    </citation>
    <scope>NUCLEOTIDE SEQUENCE [LARGE SCALE GENOMIC DNA]</scope>
    <source>
        <strain>L550</strain>
    </source>
</reference>
<proteinExistence type="inferred from homology"/>
<evidence type="ECO:0000255" key="1">
    <source>
        <dbReference type="HAMAP-Rule" id="MF_01274"/>
    </source>
</evidence>
<sequence length="257" mass="28564">MLLVVDVGNTNTVFGIFENGKNVPLFHKRTVTRKDRTSDELGLFFRGFLREFKIENEAITGGIYSSVVPTLNPILERMFQDWFKIEAIRVHYQMKLPFSISYPRPYEIGADRLVNAAACVIDSPGKFIIIDLGTATTFCVVSEKPEYLGGVIAPGLKVSMDALTRNTSQLPPIVFQSPEKILGDSTIESIQAGFFFGWIGLLEGIIREIKKDKGQDYRVIGTGGLVTVIDAAHPGIFDKIDPLLTLRGLQILHQMNS</sequence>
<dbReference type="EC" id="2.7.1.33" evidence="1"/>
<dbReference type="EMBL" id="CP000348">
    <property type="protein sequence ID" value="ABJ79948.1"/>
    <property type="molecule type" value="Genomic_DNA"/>
</dbReference>
<dbReference type="RefSeq" id="WP_002723032.1">
    <property type="nucleotide sequence ID" value="NC_008508.1"/>
</dbReference>
<dbReference type="SMR" id="Q04Y97"/>
<dbReference type="KEGG" id="lbl:LBL_2588"/>
<dbReference type="HOGENOM" id="CLU_066627_1_0_12"/>
<dbReference type="UniPathway" id="UPA00241">
    <property type="reaction ID" value="UER00352"/>
</dbReference>
<dbReference type="GO" id="GO:0005737">
    <property type="term" value="C:cytoplasm"/>
    <property type="evidence" value="ECO:0007669"/>
    <property type="project" value="UniProtKB-SubCell"/>
</dbReference>
<dbReference type="GO" id="GO:0005524">
    <property type="term" value="F:ATP binding"/>
    <property type="evidence" value="ECO:0007669"/>
    <property type="project" value="UniProtKB-UniRule"/>
</dbReference>
<dbReference type="GO" id="GO:0046872">
    <property type="term" value="F:metal ion binding"/>
    <property type="evidence" value="ECO:0007669"/>
    <property type="project" value="UniProtKB-KW"/>
</dbReference>
<dbReference type="GO" id="GO:0004594">
    <property type="term" value="F:pantothenate kinase activity"/>
    <property type="evidence" value="ECO:0007669"/>
    <property type="project" value="UniProtKB-UniRule"/>
</dbReference>
<dbReference type="GO" id="GO:0015937">
    <property type="term" value="P:coenzyme A biosynthetic process"/>
    <property type="evidence" value="ECO:0007669"/>
    <property type="project" value="UniProtKB-UniRule"/>
</dbReference>
<dbReference type="CDD" id="cd24015">
    <property type="entry name" value="ASKHA_NBD_PanK-III"/>
    <property type="match status" value="1"/>
</dbReference>
<dbReference type="Gene3D" id="3.30.420.40">
    <property type="match status" value="2"/>
</dbReference>
<dbReference type="HAMAP" id="MF_01274">
    <property type="entry name" value="Pantothen_kinase_3"/>
    <property type="match status" value="1"/>
</dbReference>
<dbReference type="InterPro" id="IPR043129">
    <property type="entry name" value="ATPase_NBD"/>
</dbReference>
<dbReference type="InterPro" id="IPR004619">
    <property type="entry name" value="Type_III_PanK"/>
</dbReference>
<dbReference type="NCBIfam" id="TIGR00671">
    <property type="entry name" value="baf"/>
    <property type="match status" value="1"/>
</dbReference>
<dbReference type="NCBIfam" id="NF009848">
    <property type="entry name" value="PRK13318.1-6"/>
    <property type="match status" value="1"/>
</dbReference>
<dbReference type="NCBIfam" id="NF009855">
    <property type="entry name" value="PRK13321.1"/>
    <property type="match status" value="1"/>
</dbReference>
<dbReference type="PANTHER" id="PTHR34265">
    <property type="entry name" value="TYPE III PANTOTHENATE KINASE"/>
    <property type="match status" value="1"/>
</dbReference>
<dbReference type="PANTHER" id="PTHR34265:SF1">
    <property type="entry name" value="TYPE III PANTOTHENATE KINASE"/>
    <property type="match status" value="1"/>
</dbReference>
<dbReference type="Pfam" id="PF03309">
    <property type="entry name" value="Pan_kinase"/>
    <property type="match status" value="1"/>
</dbReference>
<dbReference type="SUPFAM" id="SSF53067">
    <property type="entry name" value="Actin-like ATPase domain"/>
    <property type="match status" value="2"/>
</dbReference>
<name>COAX_LEPBL</name>
<keyword id="KW-0067">ATP-binding</keyword>
<keyword id="KW-0173">Coenzyme A biosynthesis</keyword>
<keyword id="KW-0963">Cytoplasm</keyword>
<keyword id="KW-0418">Kinase</keyword>
<keyword id="KW-0479">Metal-binding</keyword>
<keyword id="KW-0547">Nucleotide-binding</keyword>
<keyword id="KW-0630">Potassium</keyword>
<keyword id="KW-0808">Transferase</keyword>